<gene>
    <name evidence="1" type="primary">rppH</name>
    <name evidence="1" type="synonym">nudH</name>
    <name type="ordered locus">Bfl264</name>
</gene>
<sequence>MIDDNGYRLNVGIVLCNTYGQVLWAKRYKQCSWQFPQGGINIGETPEQAMYRELFEEIGLNYCDVRILSITRCWFCYKLPTQLVRWRIKPLCLGQKQKWFLLKLLSKDTKINMKTSKVCTFDTWQWVSLWYPIRQVVFFKRHVYRKVMKEFVKLIISR</sequence>
<accession>Q7VRF3</accession>
<protein>
    <recommendedName>
        <fullName evidence="1">RNA pyrophosphohydrolase</fullName>
        <ecNumber evidence="1">3.6.1.-</ecNumber>
    </recommendedName>
    <alternativeName>
        <fullName evidence="1">(Di)nucleoside polyphosphate hydrolase</fullName>
    </alternativeName>
</protein>
<proteinExistence type="inferred from homology"/>
<feature type="chain" id="PRO_0000057001" description="RNA pyrophosphohydrolase">
    <location>
        <begin position="1"/>
        <end position="158"/>
    </location>
</feature>
<feature type="domain" description="Nudix hydrolase" evidence="1">
    <location>
        <begin position="6"/>
        <end position="149"/>
    </location>
</feature>
<feature type="short sequence motif" description="Nudix box">
    <location>
        <begin position="38"/>
        <end position="59"/>
    </location>
</feature>
<dbReference type="EC" id="3.6.1.-" evidence="1"/>
<dbReference type="EMBL" id="BX248583">
    <property type="protein sequence ID" value="CAD83335.1"/>
    <property type="molecule type" value="Genomic_DNA"/>
</dbReference>
<dbReference type="SMR" id="Q7VRF3"/>
<dbReference type="STRING" id="203907.Bfl264"/>
<dbReference type="KEGG" id="bfl:Bfl264"/>
<dbReference type="eggNOG" id="COG0494">
    <property type="taxonomic scope" value="Bacteria"/>
</dbReference>
<dbReference type="HOGENOM" id="CLU_087195_3_2_6"/>
<dbReference type="OrthoDB" id="9816040at2"/>
<dbReference type="Proteomes" id="UP000002192">
    <property type="component" value="Chromosome"/>
</dbReference>
<dbReference type="GO" id="GO:0005737">
    <property type="term" value="C:cytoplasm"/>
    <property type="evidence" value="ECO:0007669"/>
    <property type="project" value="TreeGrafter"/>
</dbReference>
<dbReference type="GO" id="GO:0034353">
    <property type="term" value="F:mRNA 5'-diphosphatase activity"/>
    <property type="evidence" value="ECO:0007669"/>
    <property type="project" value="TreeGrafter"/>
</dbReference>
<dbReference type="GO" id="GO:0006402">
    <property type="term" value="P:mRNA catabolic process"/>
    <property type="evidence" value="ECO:0007669"/>
    <property type="project" value="TreeGrafter"/>
</dbReference>
<dbReference type="CDD" id="cd03671">
    <property type="entry name" value="NUDIX_Ap4A_hydrolase_plant_like"/>
    <property type="match status" value="1"/>
</dbReference>
<dbReference type="FunFam" id="3.90.79.10:FF:000001">
    <property type="entry name" value="RNA pyrophosphohydrolase"/>
    <property type="match status" value="1"/>
</dbReference>
<dbReference type="Gene3D" id="3.90.79.10">
    <property type="entry name" value="Nucleoside Triphosphate Pyrophosphohydrolase"/>
    <property type="match status" value="1"/>
</dbReference>
<dbReference type="HAMAP" id="MF_00298">
    <property type="entry name" value="Nudix_RppH"/>
    <property type="match status" value="1"/>
</dbReference>
<dbReference type="InterPro" id="IPR020476">
    <property type="entry name" value="Nudix_hydrolase"/>
</dbReference>
<dbReference type="InterPro" id="IPR015797">
    <property type="entry name" value="NUDIX_hydrolase-like_dom_sf"/>
</dbReference>
<dbReference type="InterPro" id="IPR020084">
    <property type="entry name" value="NUDIX_hydrolase_CS"/>
</dbReference>
<dbReference type="InterPro" id="IPR000086">
    <property type="entry name" value="NUDIX_hydrolase_dom"/>
</dbReference>
<dbReference type="InterPro" id="IPR022927">
    <property type="entry name" value="RppH"/>
</dbReference>
<dbReference type="NCBIfam" id="NF001934">
    <property type="entry name" value="PRK00714.1-1"/>
    <property type="match status" value="1"/>
</dbReference>
<dbReference type="NCBIfam" id="NF001937">
    <property type="entry name" value="PRK00714.1-4"/>
    <property type="match status" value="1"/>
</dbReference>
<dbReference type="NCBIfam" id="NF001938">
    <property type="entry name" value="PRK00714.1-5"/>
    <property type="match status" value="1"/>
</dbReference>
<dbReference type="PANTHER" id="PTHR23114">
    <property type="entry name" value="M7GPPPN-MRNA HYDROLASE"/>
    <property type="match status" value="1"/>
</dbReference>
<dbReference type="PANTHER" id="PTHR23114:SF17">
    <property type="entry name" value="M7GPPPN-MRNA HYDROLASE"/>
    <property type="match status" value="1"/>
</dbReference>
<dbReference type="Pfam" id="PF00293">
    <property type="entry name" value="NUDIX"/>
    <property type="match status" value="1"/>
</dbReference>
<dbReference type="PRINTS" id="PR00502">
    <property type="entry name" value="NUDIXFAMILY"/>
</dbReference>
<dbReference type="SUPFAM" id="SSF55811">
    <property type="entry name" value="Nudix"/>
    <property type="match status" value="1"/>
</dbReference>
<dbReference type="PROSITE" id="PS51462">
    <property type="entry name" value="NUDIX"/>
    <property type="match status" value="1"/>
</dbReference>
<dbReference type="PROSITE" id="PS00893">
    <property type="entry name" value="NUDIX_BOX"/>
    <property type="match status" value="1"/>
</dbReference>
<name>RPPH_BLOFL</name>
<reference key="1">
    <citation type="journal article" date="2003" name="Proc. Natl. Acad. Sci. U.S.A.">
        <title>The genome sequence of Blochmannia floridanus: comparative analysis of reduced genomes.</title>
        <authorList>
            <person name="Gil R."/>
            <person name="Silva F.J."/>
            <person name="Zientz E."/>
            <person name="Delmotte F."/>
            <person name="Gonzalez-Candelas F."/>
            <person name="Latorre A."/>
            <person name="Rausell C."/>
            <person name="Kamerbeek J."/>
            <person name="Gadau J."/>
            <person name="Hoelldobler B."/>
            <person name="van Ham R.C.H.J."/>
            <person name="Gross R."/>
            <person name="Moya A."/>
        </authorList>
    </citation>
    <scope>NUCLEOTIDE SEQUENCE [LARGE SCALE GENOMIC DNA]</scope>
</reference>
<organism>
    <name type="scientific">Blochmanniella floridana</name>
    <dbReference type="NCBI Taxonomy" id="203907"/>
    <lineage>
        <taxon>Bacteria</taxon>
        <taxon>Pseudomonadati</taxon>
        <taxon>Pseudomonadota</taxon>
        <taxon>Gammaproteobacteria</taxon>
        <taxon>Enterobacterales</taxon>
        <taxon>Enterobacteriaceae</taxon>
        <taxon>ant endosymbionts</taxon>
        <taxon>Candidatus Blochmanniella</taxon>
    </lineage>
</organism>
<comment type="function">
    <text evidence="1">Accelerates the degradation of transcripts by removing pyrophosphate from the 5'-end of triphosphorylated RNA, leading to a more labile monophosphorylated state that can stimulate subsequent ribonuclease cleavage.</text>
</comment>
<comment type="cofactor">
    <cofactor evidence="1">
        <name>a divalent metal cation</name>
        <dbReference type="ChEBI" id="CHEBI:60240"/>
    </cofactor>
</comment>
<comment type="similarity">
    <text evidence="1">Belongs to the Nudix hydrolase family. RppH subfamily.</text>
</comment>
<keyword id="KW-0378">Hydrolase</keyword>
<keyword id="KW-1185">Reference proteome</keyword>
<evidence type="ECO:0000255" key="1">
    <source>
        <dbReference type="HAMAP-Rule" id="MF_00298"/>
    </source>
</evidence>